<sequence length="192" mass="21330">MPTIKCVVVGDGAVGKTCLLISYTTNKFPSDYVPTVFDNYAVTVMIGDEPYTLGLFDTAGQEDYDRLRPLSYPQTDVFLVCFSVTSPASFENVKEKWFPEVHHHCPGVPCLIVGTQIDLRDDPSVQQKLARQHQHPLTHEQGERLARELGAVKYVECSALTQKGLKNVFDEAIVAALDPPVPHKKKSKCLVL</sequence>
<proteinExistence type="evidence at protein level"/>
<feature type="chain" id="PRO_0000198954" description="Cell division control protein 42 homolog">
    <location>
        <begin position="1"/>
        <end position="189"/>
    </location>
</feature>
<feature type="propeptide" id="PRO_0000281284" description="Removed in mature form" evidence="1">
    <location>
        <begin position="190"/>
        <end position="192"/>
    </location>
</feature>
<feature type="short sequence motif" description="Effector region" evidence="1">
    <location>
        <begin position="32"/>
        <end position="40"/>
    </location>
</feature>
<feature type="binding site" evidence="1">
    <location>
        <begin position="10"/>
        <end position="17"/>
    </location>
    <ligand>
        <name>GTP</name>
        <dbReference type="ChEBI" id="CHEBI:37565"/>
    </ligand>
</feature>
<feature type="binding site" evidence="1">
    <location>
        <begin position="57"/>
        <end position="61"/>
    </location>
    <ligand>
        <name>GTP</name>
        <dbReference type="ChEBI" id="CHEBI:37565"/>
    </ligand>
</feature>
<feature type="binding site" evidence="1">
    <location>
        <begin position="115"/>
        <end position="118"/>
    </location>
    <ligand>
        <name>GTP</name>
        <dbReference type="ChEBI" id="CHEBI:37565"/>
    </ligand>
</feature>
<feature type="modified residue" description="Cysteine methyl ester" evidence="1">
    <location>
        <position position="189"/>
    </location>
</feature>
<feature type="lipid moiety-binding region" description="S-geranylgeranyl cysteine" evidence="1">
    <location>
        <position position="189"/>
    </location>
</feature>
<accession>Q01112</accession>
<dbReference type="EMBL" id="M83650">
    <property type="protein sequence ID" value="AAA35298.1"/>
    <property type="molecule type" value="mRNA"/>
</dbReference>
<dbReference type="EMBL" id="L25677">
    <property type="protein sequence ID" value="AAA16472.1"/>
    <property type="molecule type" value="Genomic_DNA"/>
</dbReference>
<dbReference type="EMBL" id="CU329670">
    <property type="protein sequence ID" value="CAC08561.1"/>
    <property type="molecule type" value="Genomic_DNA"/>
</dbReference>
<dbReference type="PIR" id="A55924">
    <property type="entry name" value="A55924"/>
</dbReference>
<dbReference type="RefSeq" id="NP_593536.1">
    <property type="nucleotide sequence ID" value="NM_001018970.2"/>
</dbReference>
<dbReference type="SMR" id="Q01112"/>
<dbReference type="BioGRID" id="279463">
    <property type="interactions" value="44"/>
</dbReference>
<dbReference type="DIP" id="DIP-275N"/>
<dbReference type="FunCoup" id="Q01112">
    <property type="interactions" value="569"/>
</dbReference>
<dbReference type="IntAct" id="Q01112">
    <property type="interactions" value="3"/>
</dbReference>
<dbReference type="MINT" id="Q01112"/>
<dbReference type="STRING" id="284812.Q01112"/>
<dbReference type="iPTMnet" id="Q01112"/>
<dbReference type="PaxDb" id="4896-SPAC110.03.1"/>
<dbReference type="EnsemblFungi" id="SPAC110.03.1">
    <property type="protein sequence ID" value="SPAC110.03.1:pep"/>
    <property type="gene ID" value="SPAC110.03"/>
</dbReference>
<dbReference type="GeneID" id="2543027"/>
<dbReference type="KEGG" id="spo:2543027"/>
<dbReference type="PomBase" id="SPAC110.03">
    <property type="gene designation" value="cdc42"/>
</dbReference>
<dbReference type="VEuPathDB" id="FungiDB:SPAC110.03"/>
<dbReference type="eggNOG" id="KOG0393">
    <property type="taxonomic scope" value="Eukaryota"/>
</dbReference>
<dbReference type="HOGENOM" id="CLU_041217_21_3_1"/>
<dbReference type="InParanoid" id="Q01112"/>
<dbReference type="OMA" id="GDEPYTF"/>
<dbReference type="PhylomeDB" id="Q01112"/>
<dbReference type="Reactome" id="R-SPO-2029482">
    <property type="pathway name" value="Regulation of actin dynamics for phagocytic cup formation"/>
</dbReference>
<dbReference type="Reactome" id="R-SPO-389359">
    <property type="pathway name" value="CD28 dependent Vav1 pathway"/>
</dbReference>
<dbReference type="Reactome" id="R-SPO-5626467">
    <property type="pathway name" value="RHO GTPases activate IQGAPs"/>
</dbReference>
<dbReference type="Reactome" id="R-SPO-5627123">
    <property type="pathway name" value="RHO GTPases activate PAKs"/>
</dbReference>
<dbReference type="Reactome" id="R-SPO-5687128">
    <property type="pathway name" value="MAPK6/MAPK4 signaling"/>
</dbReference>
<dbReference type="Reactome" id="R-SPO-9013148">
    <property type="pathway name" value="CDC42 GTPase cycle"/>
</dbReference>
<dbReference type="Reactome" id="R-SPO-9013406">
    <property type="pathway name" value="RHOQ GTPase cycle"/>
</dbReference>
<dbReference type="Reactome" id="R-SPO-9013409">
    <property type="pathway name" value="RHOJ GTPase cycle"/>
</dbReference>
<dbReference type="Reactome" id="R-SPO-9013420">
    <property type="pathway name" value="RHOU GTPase cycle"/>
</dbReference>
<dbReference type="Reactome" id="R-SPO-9013424">
    <property type="pathway name" value="RHOV GTPase cycle"/>
</dbReference>
<dbReference type="PRO" id="PR:Q01112"/>
<dbReference type="Proteomes" id="UP000002485">
    <property type="component" value="Chromosome I"/>
</dbReference>
<dbReference type="GO" id="GO:0071521">
    <property type="term" value="C:Cdc42 GTPase complex"/>
    <property type="evidence" value="ECO:0000353"/>
    <property type="project" value="PomBase"/>
</dbReference>
<dbReference type="GO" id="GO:0005938">
    <property type="term" value="C:cell cortex"/>
    <property type="evidence" value="ECO:0000314"/>
    <property type="project" value="PomBase"/>
</dbReference>
<dbReference type="GO" id="GO:0051285">
    <property type="term" value="C:cell cortex of cell tip"/>
    <property type="evidence" value="ECO:0000314"/>
    <property type="project" value="PomBase"/>
</dbReference>
<dbReference type="GO" id="GO:1902716">
    <property type="term" value="C:cell cortex of growing cell tip"/>
    <property type="evidence" value="ECO:0000314"/>
    <property type="project" value="PomBase"/>
</dbReference>
<dbReference type="GO" id="GO:0032153">
    <property type="term" value="C:cell division site"/>
    <property type="evidence" value="ECO:0000314"/>
    <property type="project" value="PomBase"/>
</dbReference>
<dbReference type="GO" id="GO:0051286">
    <property type="term" value="C:cell tip"/>
    <property type="evidence" value="ECO:0000314"/>
    <property type="project" value="PomBase"/>
</dbReference>
<dbReference type="GO" id="GO:0032154">
    <property type="term" value="C:cleavage furrow"/>
    <property type="evidence" value="ECO:0000314"/>
    <property type="project" value="PomBase"/>
</dbReference>
<dbReference type="GO" id="GO:0090726">
    <property type="term" value="C:cortical dynamic polarity patch"/>
    <property type="evidence" value="ECO:0000314"/>
    <property type="project" value="PomBase"/>
</dbReference>
<dbReference type="GO" id="GO:0009898">
    <property type="term" value="C:cytoplasmic side of plasma membrane"/>
    <property type="evidence" value="ECO:0000314"/>
    <property type="project" value="PomBase"/>
</dbReference>
<dbReference type="GO" id="GO:0012505">
    <property type="term" value="C:endomembrane system"/>
    <property type="evidence" value="ECO:0000314"/>
    <property type="project" value="PomBase"/>
</dbReference>
<dbReference type="GO" id="GO:0070382">
    <property type="term" value="C:exocytic vesicle"/>
    <property type="evidence" value="ECO:0000314"/>
    <property type="project" value="PomBase"/>
</dbReference>
<dbReference type="GO" id="GO:0097575">
    <property type="term" value="C:lateral cell cortex"/>
    <property type="evidence" value="ECO:0000314"/>
    <property type="project" value="PomBase"/>
</dbReference>
<dbReference type="GO" id="GO:0043332">
    <property type="term" value="C:mating projection tip"/>
    <property type="evidence" value="ECO:0000314"/>
    <property type="project" value="PomBase"/>
</dbReference>
<dbReference type="GO" id="GO:0110085">
    <property type="term" value="C:mitotic actomyosin contractile ring"/>
    <property type="evidence" value="ECO:0000314"/>
    <property type="project" value="PomBase"/>
</dbReference>
<dbReference type="GO" id="GO:0005886">
    <property type="term" value="C:plasma membrane"/>
    <property type="evidence" value="ECO:0000314"/>
    <property type="project" value="PomBase"/>
</dbReference>
<dbReference type="GO" id="GO:0031520">
    <property type="term" value="C:plasma membrane of cell tip"/>
    <property type="evidence" value="ECO:0000269"/>
    <property type="project" value="PomBase"/>
</dbReference>
<dbReference type="GO" id="GO:0030427">
    <property type="term" value="C:site of polarized growth"/>
    <property type="evidence" value="ECO:0000314"/>
    <property type="project" value="PomBase"/>
</dbReference>
<dbReference type="GO" id="GO:0005525">
    <property type="term" value="F:GTP binding"/>
    <property type="evidence" value="ECO:0000318"/>
    <property type="project" value="GO_Central"/>
</dbReference>
<dbReference type="GO" id="GO:0003924">
    <property type="term" value="F:GTPase activity"/>
    <property type="evidence" value="ECO:0000314"/>
    <property type="project" value="PomBase"/>
</dbReference>
<dbReference type="GO" id="GO:0019901">
    <property type="term" value="F:protein kinase binding"/>
    <property type="evidence" value="ECO:0000318"/>
    <property type="project" value="GO_Central"/>
</dbReference>
<dbReference type="GO" id="GO:0043539">
    <property type="term" value="F:protein serine/threonine kinase activator activity"/>
    <property type="evidence" value="ECO:0000314"/>
    <property type="project" value="PomBase"/>
</dbReference>
<dbReference type="GO" id="GO:0035591">
    <property type="term" value="F:signaling adaptor activity"/>
    <property type="evidence" value="ECO:0000269"/>
    <property type="project" value="PomBase"/>
</dbReference>
<dbReference type="GO" id="GO:0007015">
    <property type="term" value="P:actin filament organization"/>
    <property type="evidence" value="ECO:0000318"/>
    <property type="project" value="GO_Central"/>
</dbReference>
<dbReference type="GO" id="GO:0042815">
    <property type="term" value="P:bipolar cell growth"/>
    <property type="evidence" value="ECO:0000269"/>
    <property type="project" value="PomBase"/>
</dbReference>
<dbReference type="GO" id="GO:0051301">
    <property type="term" value="P:cell division"/>
    <property type="evidence" value="ECO:0007669"/>
    <property type="project" value="UniProtKB-KW"/>
</dbReference>
<dbReference type="GO" id="GO:0006897">
    <property type="term" value="P:endocytosis"/>
    <property type="evidence" value="ECO:0000318"/>
    <property type="project" value="GO_Central"/>
</dbReference>
<dbReference type="GO" id="GO:0030010">
    <property type="term" value="P:establishment of cell polarity"/>
    <property type="evidence" value="ECO:0000315"/>
    <property type="project" value="PomBase"/>
</dbReference>
<dbReference type="GO" id="GO:0101026">
    <property type="term" value="P:mitotic nuclear membrane biogenesis"/>
    <property type="evidence" value="ECO:0000266"/>
    <property type="project" value="PomBase"/>
</dbReference>
<dbReference type="GO" id="GO:1902917">
    <property type="term" value="P:positive regulation of mating projection assembly"/>
    <property type="evidence" value="ECO:0000315"/>
    <property type="project" value="PomBase"/>
</dbReference>
<dbReference type="GO" id="GO:0032951">
    <property type="term" value="P:regulation of beta-glucan biosynthetic process"/>
    <property type="evidence" value="ECO:0000316"/>
    <property type="project" value="PomBase"/>
</dbReference>
<dbReference type="GO" id="GO:0032955">
    <property type="term" value="P:regulation of division septum assembly"/>
    <property type="evidence" value="ECO:0000315"/>
    <property type="project" value="PomBase"/>
</dbReference>
<dbReference type="GO" id="GO:2001135">
    <property type="term" value="P:regulation of endocytic recycling"/>
    <property type="evidence" value="ECO:0000315"/>
    <property type="project" value="PomBase"/>
</dbReference>
<dbReference type="GO" id="GO:0032878">
    <property type="term" value="P:regulation of establishment or maintenance of cell polarity"/>
    <property type="evidence" value="ECO:0000315"/>
    <property type="project" value="PomBase"/>
</dbReference>
<dbReference type="GO" id="GO:2000769">
    <property type="term" value="P:regulation of establishment or maintenance of cell polarity regulating cell shape"/>
    <property type="evidence" value="ECO:0000269"/>
    <property type="project" value="PomBase"/>
</dbReference>
<dbReference type="GO" id="GO:0017157">
    <property type="term" value="P:regulation of exocytosis"/>
    <property type="evidence" value="ECO:0000315"/>
    <property type="project" value="PomBase"/>
</dbReference>
<dbReference type="GO" id="GO:0033157">
    <property type="term" value="P:regulation of intracellular protein transport"/>
    <property type="evidence" value="ECO:0000315"/>
    <property type="project" value="PomBase"/>
</dbReference>
<dbReference type="GO" id="GO:0060627">
    <property type="term" value="P:regulation of vesicle-mediated transport"/>
    <property type="evidence" value="ECO:0000315"/>
    <property type="project" value="PomBase"/>
</dbReference>
<dbReference type="GO" id="GO:0007165">
    <property type="term" value="P:signal transduction"/>
    <property type="evidence" value="ECO:0000318"/>
    <property type="project" value="GO_Central"/>
</dbReference>
<dbReference type="GO" id="GO:0007264">
    <property type="term" value="P:small GTPase-mediated signal transduction"/>
    <property type="evidence" value="ECO:0007669"/>
    <property type="project" value="InterPro"/>
</dbReference>
<dbReference type="CDD" id="cd01874">
    <property type="entry name" value="Cdc42"/>
    <property type="match status" value="1"/>
</dbReference>
<dbReference type="FunFam" id="3.40.50.300:FF:000236">
    <property type="entry name" value="Cell division control protein 42"/>
    <property type="match status" value="1"/>
</dbReference>
<dbReference type="Gene3D" id="3.40.50.300">
    <property type="entry name" value="P-loop containing nucleotide triphosphate hydrolases"/>
    <property type="match status" value="1"/>
</dbReference>
<dbReference type="InterPro" id="IPR037874">
    <property type="entry name" value="Cdc42"/>
</dbReference>
<dbReference type="InterPro" id="IPR027417">
    <property type="entry name" value="P-loop_NTPase"/>
</dbReference>
<dbReference type="InterPro" id="IPR005225">
    <property type="entry name" value="Small_GTP-bd"/>
</dbReference>
<dbReference type="InterPro" id="IPR001806">
    <property type="entry name" value="Small_GTPase"/>
</dbReference>
<dbReference type="InterPro" id="IPR003578">
    <property type="entry name" value="Small_GTPase_Rho"/>
</dbReference>
<dbReference type="NCBIfam" id="TIGR00231">
    <property type="entry name" value="small_GTP"/>
    <property type="match status" value="1"/>
</dbReference>
<dbReference type="PANTHER" id="PTHR24072">
    <property type="entry name" value="RHO FAMILY GTPASE"/>
    <property type="match status" value="1"/>
</dbReference>
<dbReference type="Pfam" id="PF00071">
    <property type="entry name" value="Ras"/>
    <property type="match status" value="1"/>
</dbReference>
<dbReference type="PRINTS" id="PR00449">
    <property type="entry name" value="RASTRNSFRMNG"/>
</dbReference>
<dbReference type="SMART" id="SM00175">
    <property type="entry name" value="RAB"/>
    <property type="match status" value="1"/>
</dbReference>
<dbReference type="SMART" id="SM00173">
    <property type="entry name" value="RAS"/>
    <property type="match status" value="1"/>
</dbReference>
<dbReference type="SMART" id="SM00174">
    <property type="entry name" value="RHO"/>
    <property type="match status" value="1"/>
</dbReference>
<dbReference type="SUPFAM" id="SSF52540">
    <property type="entry name" value="P-loop containing nucleoside triphosphate hydrolases"/>
    <property type="match status" value="1"/>
</dbReference>
<dbReference type="PROSITE" id="PS51420">
    <property type="entry name" value="RHO"/>
    <property type="match status" value="1"/>
</dbReference>
<reference key="1">
    <citation type="journal article" date="1992" name="Gene">
        <title>A homologue of the ras-related CDC42 gene from Schizosaccharomyces pombe.</title>
        <authorList>
            <person name="Fawell E."/>
            <person name="Bowden S."/>
            <person name="Armstrong J."/>
        </authorList>
    </citation>
    <scope>NUCLEOTIDE SEQUENCE [MRNA]</scope>
</reference>
<reference key="2">
    <citation type="journal article" date="1994" name="Mol. Cell. Biol.">
        <title>Cdc42p GTPase is involved in controlling polarized cell growth in Schizosaccharomyces pombe.</title>
        <authorList>
            <person name="Miller P.J."/>
            <person name="Johnson D.I."/>
        </authorList>
    </citation>
    <scope>NUCLEOTIDE SEQUENCE [GENOMIC DNA]</scope>
    <source>
        <strain>ED665</strain>
    </source>
</reference>
<reference key="3">
    <citation type="journal article" date="2002" name="Nature">
        <title>The genome sequence of Schizosaccharomyces pombe.</title>
        <authorList>
            <person name="Wood V."/>
            <person name="Gwilliam R."/>
            <person name="Rajandream M.A."/>
            <person name="Lyne M.H."/>
            <person name="Lyne R."/>
            <person name="Stewart A."/>
            <person name="Sgouros J.G."/>
            <person name="Peat N."/>
            <person name="Hayles J."/>
            <person name="Baker S.G."/>
            <person name="Basham D."/>
            <person name="Bowman S."/>
            <person name="Brooks K."/>
            <person name="Brown D."/>
            <person name="Brown S."/>
            <person name="Chillingworth T."/>
            <person name="Churcher C.M."/>
            <person name="Collins M."/>
            <person name="Connor R."/>
            <person name="Cronin A."/>
            <person name="Davis P."/>
            <person name="Feltwell T."/>
            <person name="Fraser A."/>
            <person name="Gentles S."/>
            <person name="Goble A."/>
            <person name="Hamlin N."/>
            <person name="Harris D.E."/>
            <person name="Hidalgo J."/>
            <person name="Hodgson G."/>
            <person name="Holroyd S."/>
            <person name="Hornsby T."/>
            <person name="Howarth S."/>
            <person name="Huckle E.J."/>
            <person name="Hunt S."/>
            <person name="Jagels K."/>
            <person name="James K.D."/>
            <person name="Jones L."/>
            <person name="Jones M."/>
            <person name="Leather S."/>
            <person name="McDonald S."/>
            <person name="McLean J."/>
            <person name="Mooney P."/>
            <person name="Moule S."/>
            <person name="Mungall K.L."/>
            <person name="Murphy L.D."/>
            <person name="Niblett D."/>
            <person name="Odell C."/>
            <person name="Oliver K."/>
            <person name="O'Neil S."/>
            <person name="Pearson D."/>
            <person name="Quail M.A."/>
            <person name="Rabbinowitsch E."/>
            <person name="Rutherford K.M."/>
            <person name="Rutter S."/>
            <person name="Saunders D."/>
            <person name="Seeger K."/>
            <person name="Sharp S."/>
            <person name="Skelton J."/>
            <person name="Simmonds M.N."/>
            <person name="Squares R."/>
            <person name="Squares S."/>
            <person name="Stevens K."/>
            <person name="Taylor K."/>
            <person name="Taylor R.G."/>
            <person name="Tivey A."/>
            <person name="Walsh S.V."/>
            <person name="Warren T."/>
            <person name="Whitehead S."/>
            <person name="Woodward J.R."/>
            <person name="Volckaert G."/>
            <person name="Aert R."/>
            <person name="Robben J."/>
            <person name="Grymonprez B."/>
            <person name="Weltjens I."/>
            <person name="Vanstreels E."/>
            <person name="Rieger M."/>
            <person name="Schaefer M."/>
            <person name="Mueller-Auer S."/>
            <person name="Gabel C."/>
            <person name="Fuchs M."/>
            <person name="Duesterhoeft A."/>
            <person name="Fritzc C."/>
            <person name="Holzer E."/>
            <person name="Moestl D."/>
            <person name="Hilbert H."/>
            <person name="Borzym K."/>
            <person name="Langer I."/>
            <person name="Beck A."/>
            <person name="Lehrach H."/>
            <person name="Reinhardt R."/>
            <person name="Pohl T.M."/>
            <person name="Eger P."/>
            <person name="Zimmermann W."/>
            <person name="Wedler H."/>
            <person name="Wambutt R."/>
            <person name="Purnelle B."/>
            <person name="Goffeau A."/>
            <person name="Cadieu E."/>
            <person name="Dreano S."/>
            <person name="Gloux S."/>
            <person name="Lelaure V."/>
            <person name="Mottier S."/>
            <person name="Galibert F."/>
            <person name="Aves S.J."/>
            <person name="Xiang Z."/>
            <person name="Hunt C."/>
            <person name="Moore K."/>
            <person name="Hurst S.M."/>
            <person name="Lucas M."/>
            <person name="Rochet M."/>
            <person name="Gaillardin C."/>
            <person name="Tallada V.A."/>
            <person name="Garzon A."/>
            <person name="Thode G."/>
            <person name="Daga R.R."/>
            <person name="Cruzado L."/>
            <person name="Jimenez J."/>
            <person name="Sanchez M."/>
            <person name="del Rey F."/>
            <person name="Benito J."/>
            <person name="Dominguez A."/>
            <person name="Revuelta J.L."/>
            <person name="Moreno S."/>
            <person name="Armstrong J."/>
            <person name="Forsburg S.L."/>
            <person name="Cerutti L."/>
            <person name="Lowe T."/>
            <person name="McCombie W.R."/>
            <person name="Paulsen I."/>
            <person name="Potashkin J."/>
            <person name="Shpakovski G.V."/>
            <person name="Ussery D."/>
            <person name="Barrell B.G."/>
            <person name="Nurse P."/>
        </authorList>
    </citation>
    <scope>NUCLEOTIDE SEQUENCE [LARGE SCALE GENOMIC DNA]</scope>
    <source>
        <strain>972 / ATCC 24843</strain>
    </source>
</reference>
<reference key="4">
    <citation type="journal article" date="2003" name="Mol. Biol. Cell">
        <title>Gef1p, a new guanine nucleotide exchange factor for Cdc42p, regulates polarity in Schizosaccharomyces pombe.</title>
        <authorList>
            <person name="Coll P.M."/>
            <person name="Trillo Y."/>
            <person name="Ametzazurra A."/>
            <person name="Perez P."/>
        </authorList>
    </citation>
    <scope>INTERACTION WITH GEF1</scope>
</reference>
<reference key="5">
    <citation type="journal article" date="2003" name="Mol. Biol. Cell">
        <title>Gef1p and Scd1p, the Two GDP-GTP exchange factors for Cdc42p, form a ring structure that shrinks during cytokinesis in Schizosaccharomyces pombe.</title>
        <authorList>
            <person name="Hirota K."/>
            <person name="Tanaka K."/>
            <person name="Ohta K."/>
            <person name="Yamamoto M."/>
        </authorList>
    </citation>
    <scope>INTERACTION WITH SCD1</scope>
</reference>
<protein>
    <recommendedName>
        <fullName>Cell division control protein 42 homolog</fullName>
    </recommendedName>
    <alternativeName>
        <fullName>CDC42Sp</fullName>
    </alternativeName>
</protein>
<comment type="function">
    <text>Involved in development of cell polarity during the cell division cycle.</text>
</comment>
<comment type="subunit">
    <text evidence="2 3">Scd1, scd2, cdc42, and ras1, in its GTP-bound state, act cooperatively to form a protein complex. Interacts with gef1 and scd1.</text>
</comment>
<comment type="interaction">
    <interactant intactId="EBI-767502">
        <id>Q01112</id>
    </interactant>
    <interactant intactId="EBI-1556299">
        <id>Q09763</id>
        <label>gef1</label>
    </interactant>
    <organismsDiffer>false</organismsDiffer>
    <experiments>7</experiments>
</comment>
<comment type="interaction">
    <interactant intactId="EBI-767502">
        <id>Q01112</id>
    </interactant>
    <interactant intactId="EBI-1556284">
        <id>Q9UUM7</id>
        <label>hob3</label>
    </interactant>
    <organismsDiffer>false</organismsDiffer>
    <experiments>2</experiments>
</comment>
<comment type="subcellular location">
    <subcellularLocation>
        <location evidence="4">Cell membrane</location>
        <topology evidence="4">Lipid-anchor</topology>
        <orientation evidence="4">Cytoplasmic side</orientation>
    </subcellularLocation>
</comment>
<comment type="similarity">
    <text evidence="4">Belongs to the small GTPase superfamily. Rho family. CDC42 subfamily.</text>
</comment>
<gene>
    <name type="primary">cdc42</name>
    <name type="ORF">SPAC110.03</name>
</gene>
<organism>
    <name type="scientific">Schizosaccharomyces pombe (strain 972 / ATCC 24843)</name>
    <name type="common">Fission yeast</name>
    <dbReference type="NCBI Taxonomy" id="284812"/>
    <lineage>
        <taxon>Eukaryota</taxon>
        <taxon>Fungi</taxon>
        <taxon>Dikarya</taxon>
        <taxon>Ascomycota</taxon>
        <taxon>Taphrinomycotina</taxon>
        <taxon>Schizosaccharomycetes</taxon>
        <taxon>Schizosaccharomycetales</taxon>
        <taxon>Schizosaccharomycetaceae</taxon>
        <taxon>Schizosaccharomyces</taxon>
    </lineage>
</organism>
<keyword id="KW-0131">Cell cycle</keyword>
<keyword id="KW-0132">Cell division</keyword>
<keyword id="KW-1003">Cell membrane</keyword>
<keyword id="KW-0342">GTP-binding</keyword>
<keyword id="KW-0449">Lipoprotein</keyword>
<keyword id="KW-0472">Membrane</keyword>
<keyword id="KW-0488">Methylation</keyword>
<keyword id="KW-0547">Nucleotide-binding</keyword>
<keyword id="KW-0636">Prenylation</keyword>
<keyword id="KW-1185">Reference proteome</keyword>
<evidence type="ECO:0000250" key="1"/>
<evidence type="ECO:0000269" key="2">
    <source>
    </source>
</evidence>
<evidence type="ECO:0000269" key="3">
    <source>
    </source>
</evidence>
<evidence type="ECO:0000305" key="4"/>
<name>CDC42_SCHPO</name>